<organism>
    <name type="scientific">Arabidopsis thaliana</name>
    <name type="common">Mouse-ear cress</name>
    <dbReference type="NCBI Taxonomy" id="3702"/>
    <lineage>
        <taxon>Eukaryota</taxon>
        <taxon>Viridiplantae</taxon>
        <taxon>Streptophyta</taxon>
        <taxon>Embryophyta</taxon>
        <taxon>Tracheophyta</taxon>
        <taxon>Spermatophyta</taxon>
        <taxon>Magnoliopsida</taxon>
        <taxon>eudicotyledons</taxon>
        <taxon>Gunneridae</taxon>
        <taxon>Pentapetalae</taxon>
        <taxon>rosids</taxon>
        <taxon>malvids</taxon>
        <taxon>Brassicales</taxon>
        <taxon>Brassicaceae</taxon>
        <taxon>Camelineae</taxon>
        <taxon>Arabidopsis</taxon>
    </lineage>
</organism>
<name>GDL43_ARATH</name>
<protein>
    <recommendedName>
        <fullName>GDSL esterase/lipase At2g31540</fullName>
        <ecNumber>3.1.1.-</ecNumber>
    </recommendedName>
    <alternativeName>
        <fullName>Extracellular lipase At2g31540</fullName>
    </alternativeName>
</protein>
<evidence type="ECO:0000250" key="1"/>
<evidence type="ECO:0000255" key="2"/>
<evidence type="ECO:0000305" key="3"/>
<feature type="signal peptide" evidence="2">
    <location>
        <begin position="1"/>
        <end position="23"/>
    </location>
</feature>
<feature type="chain" id="PRO_0000367384" description="GDSL esterase/lipase At2g31540">
    <location>
        <begin position="24"/>
        <end position="360"/>
    </location>
</feature>
<feature type="active site" description="Nucleophile" evidence="1">
    <location>
        <position position="42"/>
    </location>
</feature>
<feature type="active site" evidence="1">
    <location>
        <position position="334"/>
    </location>
</feature>
<feature type="active site" evidence="1">
    <location>
        <position position="337"/>
    </location>
</feature>
<feature type="glycosylation site" description="N-linked (GlcNAc...) asparagine" evidence="2">
    <location>
        <position position="104"/>
    </location>
</feature>
<feature type="glycosylation site" description="N-linked (GlcNAc...) asparagine" evidence="2">
    <location>
        <position position="326"/>
    </location>
</feature>
<feature type="sequence conflict" description="In Ref. 3; AAM61458." evidence="3" ref="3">
    <original>A</original>
    <variation>T</variation>
    <location>
        <position position="25"/>
    </location>
</feature>
<feature type="sequence conflict" description="In Ref. 3; AAM61458." evidence="3" ref="3">
    <original>S</original>
    <variation>G</variation>
    <location>
        <position position="314"/>
    </location>
</feature>
<feature type="sequence conflict" description="In Ref. 3; AAM61458." evidence="3" ref="3">
    <original>L</original>
    <variation>M</variation>
    <location>
        <position position="331"/>
    </location>
</feature>
<feature type="sequence conflict" description="In Ref. 3; AAM61458." evidence="3" ref="3">
    <original>L</original>
    <variation>R</variation>
    <location>
        <position position="349"/>
    </location>
</feature>
<keyword id="KW-0325">Glycoprotein</keyword>
<keyword id="KW-0378">Hydrolase</keyword>
<keyword id="KW-0442">Lipid degradation</keyword>
<keyword id="KW-0443">Lipid metabolism</keyword>
<keyword id="KW-1185">Reference proteome</keyword>
<keyword id="KW-0964">Secreted</keyword>
<keyword id="KW-0732">Signal</keyword>
<proteinExistence type="evidence at transcript level"/>
<dbReference type="EC" id="3.1.1.-"/>
<dbReference type="EMBL" id="AC007071">
    <property type="protein sequence ID" value="AAD24833.1"/>
    <property type="molecule type" value="Genomic_DNA"/>
</dbReference>
<dbReference type="EMBL" id="CP002685">
    <property type="protein sequence ID" value="AEC08558.1"/>
    <property type="molecule type" value="Genomic_DNA"/>
</dbReference>
<dbReference type="EMBL" id="AY084895">
    <property type="protein sequence ID" value="AAM61458.1"/>
    <property type="molecule type" value="mRNA"/>
</dbReference>
<dbReference type="PIR" id="A84722">
    <property type="entry name" value="A84722"/>
</dbReference>
<dbReference type="RefSeq" id="NP_180712.1">
    <property type="nucleotide sequence ID" value="NM_128711.2"/>
</dbReference>
<dbReference type="SMR" id="Q9SIQ3"/>
<dbReference type="FunCoup" id="Q9SIQ3">
    <property type="interactions" value="107"/>
</dbReference>
<dbReference type="GlyGen" id="Q9SIQ3">
    <property type="glycosylation" value="2 sites"/>
</dbReference>
<dbReference type="PaxDb" id="3702-AT2G31540.1"/>
<dbReference type="ProteomicsDB" id="247093"/>
<dbReference type="EnsemblPlants" id="AT2G31540.1">
    <property type="protein sequence ID" value="AT2G31540.1"/>
    <property type="gene ID" value="AT2G31540"/>
</dbReference>
<dbReference type="GeneID" id="817712"/>
<dbReference type="Gramene" id="AT2G31540.1">
    <property type="protein sequence ID" value="AT2G31540.1"/>
    <property type="gene ID" value="AT2G31540"/>
</dbReference>
<dbReference type="KEGG" id="ath:AT2G31540"/>
<dbReference type="Araport" id="AT2G31540"/>
<dbReference type="TAIR" id="AT2G31540"/>
<dbReference type="eggNOG" id="ENOG502QSNM">
    <property type="taxonomic scope" value="Eukaryota"/>
</dbReference>
<dbReference type="HOGENOM" id="CLU_015101_0_1_1"/>
<dbReference type="InParanoid" id="Q9SIQ3"/>
<dbReference type="OMA" id="MTPVCRN"/>
<dbReference type="OrthoDB" id="1600564at2759"/>
<dbReference type="PhylomeDB" id="Q9SIQ3"/>
<dbReference type="BioCyc" id="ARA:AT2G31540-MONOMER"/>
<dbReference type="PRO" id="PR:Q9SIQ3"/>
<dbReference type="Proteomes" id="UP000006548">
    <property type="component" value="Chromosome 2"/>
</dbReference>
<dbReference type="ExpressionAtlas" id="Q9SIQ3">
    <property type="expression patterns" value="baseline and differential"/>
</dbReference>
<dbReference type="GO" id="GO:0005576">
    <property type="term" value="C:extracellular region"/>
    <property type="evidence" value="ECO:0007669"/>
    <property type="project" value="UniProtKB-SubCell"/>
</dbReference>
<dbReference type="GO" id="GO:0016788">
    <property type="term" value="F:hydrolase activity, acting on ester bonds"/>
    <property type="evidence" value="ECO:0007669"/>
    <property type="project" value="InterPro"/>
</dbReference>
<dbReference type="GO" id="GO:0016042">
    <property type="term" value="P:lipid catabolic process"/>
    <property type="evidence" value="ECO:0007669"/>
    <property type="project" value="UniProtKB-KW"/>
</dbReference>
<dbReference type="CDD" id="cd01837">
    <property type="entry name" value="SGNH_plant_lipase_like"/>
    <property type="match status" value="1"/>
</dbReference>
<dbReference type="FunFam" id="3.40.50.1110:FF:000003">
    <property type="entry name" value="GDSL esterase/lipase APG"/>
    <property type="match status" value="1"/>
</dbReference>
<dbReference type="Gene3D" id="3.40.50.1110">
    <property type="entry name" value="SGNH hydrolase"/>
    <property type="match status" value="1"/>
</dbReference>
<dbReference type="InterPro" id="IPR001087">
    <property type="entry name" value="GDSL"/>
</dbReference>
<dbReference type="InterPro" id="IPR050592">
    <property type="entry name" value="GDSL_lipolytic_enzyme"/>
</dbReference>
<dbReference type="InterPro" id="IPR036514">
    <property type="entry name" value="SGNH_hydro_sf"/>
</dbReference>
<dbReference type="InterPro" id="IPR035669">
    <property type="entry name" value="SGNH_plant_lipase-like"/>
</dbReference>
<dbReference type="PANTHER" id="PTHR45642">
    <property type="entry name" value="GDSL ESTERASE/LIPASE EXL3"/>
    <property type="match status" value="1"/>
</dbReference>
<dbReference type="PANTHER" id="PTHR45642:SF30">
    <property type="entry name" value="SGNH HYDROLASE-TYPE ESTERASE DOMAIN-CONTAINING PROTEIN"/>
    <property type="match status" value="1"/>
</dbReference>
<dbReference type="Pfam" id="PF00657">
    <property type="entry name" value="Lipase_GDSL"/>
    <property type="match status" value="1"/>
</dbReference>
<dbReference type="SUPFAM" id="SSF52266">
    <property type="entry name" value="SGNH hydrolase"/>
    <property type="match status" value="1"/>
</dbReference>
<accession>Q9SIQ3</accession>
<accession>Q8LFE6</accession>
<comment type="subcellular location">
    <subcellularLocation>
        <location evidence="3">Secreted</location>
    </subcellularLocation>
</comment>
<comment type="similarity">
    <text evidence="3">Belongs to the 'GDSL' lipolytic enzyme family.</text>
</comment>
<reference key="1">
    <citation type="journal article" date="1999" name="Nature">
        <title>Sequence and analysis of chromosome 2 of the plant Arabidopsis thaliana.</title>
        <authorList>
            <person name="Lin X."/>
            <person name="Kaul S."/>
            <person name="Rounsley S.D."/>
            <person name="Shea T.P."/>
            <person name="Benito M.-I."/>
            <person name="Town C.D."/>
            <person name="Fujii C.Y."/>
            <person name="Mason T.M."/>
            <person name="Bowman C.L."/>
            <person name="Barnstead M.E."/>
            <person name="Feldblyum T.V."/>
            <person name="Buell C.R."/>
            <person name="Ketchum K.A."/>
            <person name="Lee J.J."/>
            <person name="Ronning C.M."/>
            <person name="Koo H.L."/>
            <person name="Moffat K.S."/>
            <person name="Cronin L.A."/>
            <person name="Shen M."/>
            <person name="Pai G."/>
            <person name="Van Aken S."/>
            <person name="Umayam L."/>
            <person name="Tallon L.J."/>
            <person name="Gill J.E."/>
            <person name="Adams M.D."/>
            <person name="Carrera A.J."/>
            <person name="Creasy T.H."/>
            <person name="Goodman H.M."/>
            <person name="Somerville C.R."/>
            <person name="Copenhaver G.P."/>
            <person name="Preuss D."/>
            <person name="Nierman W.C."/>
            <person name="White O."/>
            <person name="Eisen J.A."/>
            <person name="Salzberg S.L."/>
            <person name="Fraser C.M."/>
            <person name="Venter J.C."/>
        </authorList>
    </citation>
    <scope>NUCLEOTIDE SEQUENCE [LARGE SCALE GENOMIC DNA]</scope>
    <source>
        <strain>cv. Columbia</strain>
    </source>
</reference>
<reference key="2">
    <citation type="journal article" date="2017" name="Plant J.">
        <title>Araport11: a complete reannotation of the Arabidopsis thaliana reference genome.</title>
        <authorList>
            <person name="Cheng C.Y."/>
            <person name="Krishnakumar V."/>
            <person name="Chan A.P."/>
            <person name="Thibaud-Nissen F."/>
            <person name="Schobel S."/>
            <person name="Town C.D."/>
        </authorList>
    </citation>
    <scope>GENOME REANNOTATION</scope>
    <source>
        <strain>cv. Columbia</strain>
    </source>
</reference>
<reference key="3">
    <citation type="submission" date="2002-03" db="EMBL/GenBank/DDBJ databases">
        <title>Full-length cDNA from Arabidopsis thaliana.</title>
        <authorList>
            <person name="Brover V.V."/>
            <person name="Troukhan M.E."/>
            <person name="Alexandrov N.A."/>
            <person name="Lu Y.-P."/>
            <person name="Flavell R.B."/>
            <person name="Feldmann K.A."/>
        </authorList>
    </citation>
    <scope>NUCLEOTIDE SEQUENCE [LARGE SCALE MRNA]</scope>
</reference>
<reference key="4">
    <citation type="journal article" date="2004" name="Prog. Lipid Res.">
        <title>GDSL family of serine esterases/lipases.</title>
        <authorList>
            <person name="Akoh C.C."/>
            <person name="Lee G.-C."/>
            <person name="Liaw Y.-C."/>
            <person name="Huang T.-H."/>
            <person name="Shaw J.-F."/>
        </authorList>
    </citation>
    <scope>REVIEW</scope>
</reference>
<reference key="5">
    <citation type="journal article" date="2008" name="Pak. J. Biol. Sci.">
        <title>Sequence analysis of GDSL lipase gene family in Arabidopsis thaliana.</title>
        <authorList>
            <person name="Ling H."/>
        </authorList>
    </citation>
    <scope>GENE FAMILY</scope>
</reference>
<gene>
    <name type="ordered locus">At2g31540</name>
    <name type="ORF">T9H9.6</name>
</gene>
<sequence>MSTSKAITLTLFIATTLLAPCNAAANATTKPLFPAILIFGDSTVDTGNNNYPLPTIFRAEHFPYGMDLPDGKANGRFSNGKLISDIIATKLNIKEFIPPFLQPNLSDQDILTGVCFASAGAGYDDLTSLSTQAIRVSEQPNMFKSYIARLKGIVGDKKAMEIINNAFVVVSAGPNDFILNYYEIPSRRLEYPFISGYQDFILKRLENFVRELYSLGVRNVLVGGLPPMGCLPIHMTAKFRNIFRFCLEHHNKDSVLYNEKLQNLLPQIEASLPGSKFLYADVYNPMMEMIQNPSKYGFKETKRGCCGTGFLETSFMCNVFSPVCQNRSEFLFFDSIHPSEATYNVIGNLLDPLIRGKFQA</sequence>